<organism>
    <name type="scientific">Cryptococcus neoformans var. neoformans serotype D (strain B-3501A)</name>
    <name type="common">Filobasidiella neoformans</name>
    <dbReference type="NCBI Taxonomy" id="283643"/>
    <lineage>
        <taxon>Eukaryota</taxon>
        <taxon>Fungi</taxon>
        <taxon>Dikarya</taxon>
        <taxon>Basidiomycota</taxon>
        <taxon>Agaricomycotina</taxon>
        <taxon>Tremellomycetes</taxon>
        <taxon>Tremellales</taxon>
        <taxon>Cryptococcaceae</taxon>
        <taxon>Cryptococcus</taxon>
        <taxon>Cryptococcus neoformans species complex</taxon>
    </lineage>
</organism>
<sequence>MSSQALDSAKVAFIEAAIEHGVLLFGNFTLKSGRQSPYFFNAGLLYSSSLLSTTAQAYAKVLSSSRIPDFDVLFGPAYKGISLAAVSAVSLYQQTGKDIGYCYNRKEKKDHGEGGTMVGAPLKGRIVIIDDVLTSGKAIREAIDILKASPEAKLVGIVQLVDRQEKGQSGSGKSTVQEVEEEFGVPVEPIIGLDDIVKYLESSGKWEKELQEVRKYRAEYGVQRS</sequence>
<evidence type="ECO:0000250" key="1"/>
<evidence type="ECO:0000305" key="2"/>
<accession>P0CQ41</accession>
<accession>P18132</accession>
<accession>Q55PW2</accession>
<accession>Q5KDJ6</accession>
<comment type="function">
    <text evidence="1">Catalyzes the transfer of a ribosyl phosphate group from 5-phosphoribose 1-diphosphate to orotate, leading to the formation of orotidine monophosphate (OMP).</text>
</comment>
<comment type="catalytic activity">
    <reaction>
        <text>orotidine 5'-phosphate + diphosphate = orotate + 5-phospho-alpha-D-ribose 1-diphosphate</text>
        <dbReference type="Rhea" id="RHEA:10380"/>
        <dbReference type="ChEBI" id="CHEBI:30839"/>
        <dbReference type="ChEBI" id="CHEBI:33019"/>
        <dbReference type="ChEBI" id="CHEBI:57538"/>
        <dbReference type="ChEBI" id="CHEBI:58017"/>
        <dbReference type="EC" id="2.4.2.10"/>
    </reaction>
</comment>
<comment type="pathway">
    <text>Pyrimidine metabolism; UMP biosynthesis via de novo pathway; UMP from orotate: step 1/2.</text>
</comment>
<comment type="subunit">
    <text evidence="1">Homodimer.</text>
</comment>
<comment type="similarity">
    <text evidence="2">Belongs to the purine/pyrimidine phosphoribosyltransferase family. PyrE subfamily.</text>
</comment>
<feature type="chain" id="PRO_0000410230" description="Orotate phosphoribosyltransferase">
    <location>
        <begin position="1"/>
        <end position="225"/>
    </location>
</feature>
<feature type="binding site" description="in other chain" evidence="1">
    <location>
        <position position="31"/>
    </location>
    <ligand>
        <name>5-phospho-alpha-D-ribose 1-diphosphate</name>
        <dbReference type="ChEBI" id="CHEBI:58017"/>
        <note>ligand shared between dimeric partners</note>
    </ligand>
</feature>
<feature type="binding site" evidence="1">
    <location>
        <begin position="39"/>
        <end position="40"/>
    </location>
    <ligand>
        <name>orotate</name>
        <dbReference type="ChEBI" id="CHEBI:30839"/>
    </ligand>
</feature>
<feature type="binding site" description="in other chain" evidence="1">
    <location>
        <begin position="78"/>
        <end position="79"/>
    </location>
    <ligand>
        <name>5-phospho-alpha-D-ribose 1-diphosphate</name>
        <dbReference type="ChEBI" id="CHEBI:58017"/>
        <note>ligand shared between dimeric partners</note>
    </ligand>
</feature>
<feature type="binding site" evidence="1">
    <location>
        <position position="105"/>
    </location>
    <ligand>
        <name>5-phospho-alpha-D-ribose 1-diphosphate</name>
        <dbReference type="ChEBI" id="CHEBI:58017"/>
        <note>ligand shared between dimeric partners</note>
    </ligand>
</feature>
<feature type="binding site" description="in other chain" evidence="1">
    <location>
        <position position="106"/>
    </location>
    <ligand>
        <name>5-phospho-alpha-D-ribose 1-diphosphate</name>
        <dbReference type="ChEBI" id="CHEBI:58017"/>
        <note>ligand shared between dimeric partners</note>
    </ligand>
</feature>
<feature type="binding site" evidence="1">
    <location>
        <position position="109"/>
    </location>
    <ligand>
        <name>5-phospho-alpha-D-ribose 1-diphosphate</name>
        <dbReference type="ChEBI" id="CHEBI:58017"/>
        <note>ligand shared between dimeric partners</note>
    </ligand>
</feature>
<feature type="binding site" evidence="1">
    <location>
        <position position="111"/>
    </location>
    <ligand>
        <name>5-phospho-alpha-D-ribose 1-diphosphate</name>
        <dbReference type="ChEBI" id="CHEBI:58017"/>
        <note>ligand shared between dimeric partners</note>
    </ligand>
</feature>
<feature type="binding site" description="in other chain" evidence="1">
    <location>
        <begin position="130"/>
        <end position="138"/>
    </location>
    <ligand>
        <name>5-phospho-alpha-D-ribose 1-diphosphate</name>
        <dbReference type="ChEBI" id="CHEBI:58017"/>
        <note>ligand shared between dimeric partners</note>
    </ligand>
</feature>
<feature type="binding site" evidence="1">
    <location>
        <position position="134"/>
    </location>
    <ligand>
        <name>orotate</name>
        <dbReference type="ChEBI" id="CHEBI:30839"/>
    </ligand>
</feature>
<feature type="binding site" evidence="1">
    <location>
        <position position="163"/>
    </location>
    <ligand>
        <name>orotate</name>
        <dbReference type="ChEBI" id="CHEBI:30839"/>
    </ligand>
</feature>
<keyword id="KW-0328">Glycosyltransferase</keyword>
<keyword id="KW-0665">Pyrimidine biosynthesis</keyword>
<keyword id="KW-0808">Transferase</keyword>
<gene>
    <name type="primary">URA5</name>
    <name type="ordered locus">CNBG1020</name>
</gene>
<protein>
    <recommendedName>
        <fullName>Orotate phosphoribosyltransferase</fullName>
        <shortName>OPRT</shortName>
        <shortName>OPRTase</shortName>
        <ecNumber>2.4.2.10</ecNumber>
    </recommendedName>
</protein>
<dbReference type="EC" id="2.4.2.10"/>
<dbReference type="EMBL" id="AAEY01000036">
    <property type="protein sequence ID" value="EAL19809.1"/>
    <property type="molecule type" value="Genomic_DNA"/>
</dbReference>
<dbReference type="RefSeq" id="XP_774456.1">
    <property type="nucleotide sequence ID" value="XM_769363.1"/>
</dbReference>
<dbReference type="SMR" id="P0CQ41"/>
<dbReference type="EnsemblFungi" id="AAW44772">
    <property type="protein sequence ID" value="AAW44772"/>
    <property type="gene ID" value="CNG03730"/>
</dbReference>
<dbReference type="GeneID" id="4937135"/>
<dbReference type="KEGG" id="cnb:CNBG1020"/>
<dbReference type="VEuPathDB" id="FungiDB:CNBG1020"/>
<dbReference type="HOGENOM" id="CLU_074878_0_1_1"/>
<dbReference type="UniPathway" id="UPA00070">
    <property type="reaction ID" value="UER00119"/>
</dbReference>
<dbReference type="GO" id="GO:0005737">
    <property type="term" value="C:cytoplasm"/>
    <property type="evidence" value="ECO:0007669"/>
    <property type="project" value="TreeGrafter"/>
</dbReference>
<dbReference type="GO" id="GO:0004588">
    <property type="term" value="F:orotate phosphoribosyltransferase activity"/>
    <property type="evidence" value="ECO:0007669"/>
    <property type="project" value="UniProtKB-EC"/>
</dbReference>
<dbReference type="GO" id="GO:0006207">
    <property type="term" value="P:'de novo' pyrimidine nucleobase biosynthetic process"/>
    <property type="evidence" value="ECO:0007669"/>
    <property type="project" value="TreeGrafter"/>
</dbReference>
<dbReference type="GO" id="GO:0044205">
    <property type="term" value="P:'de novo' UMP biosynthetic process"/>
    <property type="evidence" value="ECO:0007669"/>
    <property type="project" value="UniProtKB-UniPathway"/>
</dbReference>
<dbReference type="GO" id="GO:0046132">
    <property type="term" value="P:pyrimidine ribonucleoside biosynthetic process"/>
    <property type="evidence" value="ECO:0007669"/>
    <property type="project" value="TreeGrafter"/>
</dbReference>
<dbReference type="CDD" id="cd06223">
    <property type="entry name" value="PRTases_typeI"/>
    <property type="match status" value="1"/>
</dbReference>
<dbReference type="FunFam" id="3.40.50.2020:FF:000008">
    <property type="entry name" value="Orotate phosphoribosyltransferase"/>
    <property type="match status" value="1"/>
</dbReference>
<dbReference type="Gene3D" id="3.40.50.2020">
    <property type="match status" value="1"/>
</dbReference>
<dbReference type="HAMAP" id="MF_01208">
    <property type="entry name" value="PyrE"/>
    <property type="match status" value="1"/>
</dbReference>
<dbReference type="InterPro" id="IPR023031">
    <property type="entry name" value="OPRT"/>
</dbReference>
<dbReference type="InterPro" id="IPR004467">
    <property type="entry name" value="Or_phspho_trans_dom"/>
</dbReference>
<dbReference type="InterPro" id="IPR000836">
    <property type="entry name" value="PRibTrfase_dom"/>
</dbReference>
<dbReference type="InterPro" id="IPR029057">
    <property type="entry name" value="PRTase-like"/>
</dbReference>
<dbReference type="NCBIfam" id="TIGR00336">
    <property type="entry name" value="pyrE"/>
    <property type="match status" value="1"/>
</dbReference>
<dbReference type="PANTHER" id="PTHR46683">
    <property type="entry name" value="OROTATE PHOSPHORIBOSYLTRANSFERASE 1-RELATED"/>
    <property type="match status" value="1"/>
</dbReference>
<dbReference type="PANTHER" id="PTHR46683:SF1">
    <property type="entry name" value="OROTATE PHOSPHORIBOSYLTRANSFERASE 1-RELATED"/>
    <property type="match status" value="1"/>
</dbReference>
<dbReference type="Pfam" id="PF00156">
    <property type="entry name" value="Pribosyltran"/>
    <property type="match status" value="1"/>
</dbReference>
<dbReference type="SUPFAM" id="SSF53271">
    <property type="entry name" value="PRTase-like"/>
    <property type="match status" value="1"/>
</dbReference>
<dbReference type="PROSITE" id="PS00103">
    <property type="entry name" value="PUR_PYR_PR_TRANSFER"/>
    <property type="match status" value="1"/>
</dbReference>
<reference key="1">
    <citation type="journal article" date="2005" name="Science">
        <title>The genome of the basidiomycetous yeast and human pathogen Cryptococcus neoformans.</title>
        <authorList>
            <person name="Loftus B.J."/>
            <person name="Fung E."/>
            <person name="Roncaglia P."/>
            <person name="Rowley D."/>
            <person name="Amedeo P."/>
            <person name="Bruno D."/>
            <person name="Vamathevan J."/>
            <person name="Miranda M."/>
            <person name="Anderson I.J."/>
            <person name="Fraser J.A."/>
            <person name="Allen J.E."/>
            <person name="Bosdet I.E."/>
            <person name="Brent M.R."/>
            <person name="Chiu R."/>
            <person name="Doering T.L."/>
            <person name="Donlin M.J."/>
            <person name="D'Souza C.A."/>
            <person name="Fox D.S."/>
            <person name="Grinberg V."/>
            <person name="Fu J."/>
            <person name="Fukushima M."/>
            <person name="Haas B.J."/>
            <person name="Huang J.C."/>
            <person name="Janbon G."/>
            <person name="Jones S.J.M."/>
            <person name="Koo H.L."/>
            <person name="Krzywinski M.I."/>
            <person name="Kwon-Chung K.J."/>
            <person name="Lengeler K.B."/>
            <person name="Maiti R."/>
            <person name="Marra M.A."/>
            <person name="Marra R.E."/>
            <person name="Mathewson C.A."/>
            <person name="Mitchell T.G."/>
            <person name="Pertea M."/>
            <person name="Riggs F.R."/>
            <person name="Salzberg S.L."/>
            <person name="Schein J.E."/>
            <person name="Shvartsbeyn A."/>
            <person name="Shin H."/>
            <person name="Shumway M."/>
            <person name="Specht C.A."/>
            <person name="Suh B.B."/>
            <person name="Tenney A."/>
            <person name="Utterback T.R."/>
            <person name="Wickes B.L."/>
            <person name="Wortman J.R."/>
            <person name="Wye N.H."/>
            <person name="Kronstad J.W."/>
            <person name="Lodge J.K."/>
            <person name="Heitman J."/>
            <person name="Davis R.W."/>
            <person name="Fraser C.M."/>
            <person name="Hyman R.W."/>
        </authorList>
    </citation>
    <scope>NUCLEOTIDE SEQUENCE [LARGE SCALE GENOMIC DNA]</scope>
    <source>
        <strain>B-3501A</strain>
    </source>
</reference>
<proteinExistence type="inferred from homology"/>
<name>PYRE_CRYNB</name>